<gene>
    <name evidence="2" type="primary">pgl-2</name>
    <name evidence="2" type="ORF">B0523.3</name>
</gene>
<keyword id="KW-0217">Developmental protein</keyword>
<keyword id="KW-0221">Differentiation</keyword>
<keyword id="KW-0896">Oogenesis</keyword>
<keyword id="KW-1185">Reference proteome</keyword>
<name>PGL2_CAEEL</name>
<proteinExistence type="evidence at protein level"/>
<sequence length="532" mass="60597">MKPCKREIVDFDGIRTHFFPNLALYTCYNEELIAHHSENANRFTSYVFGAVEDSPTEQEILEILFPENANPEAISTGMDACLALGENFLSHYKSFNARLNRQNHSHDLLDAVQEFDEKKILAISRKSRLRKSADSKILTILVNILLSENQEEKFMEICELCSLDLDFDAFVLIKILQLENEENAEEVQIIRENVVDQILEQKPFLAHLLKNGPEKIDEITKLLSVPIIGSSSNQINQLITKICDSSEISDTAVEEHYHQNFKLMNILVRTMIVDRFDLTIDALEQIPVEIKNRMFPGIRIRVLQDTLHFLHQLFKVFLNESQKFDNLAPQSFAKAIKNVWVRHAIIGILDSLKFSLNKDVFNQLVPLIPGSQVSNDVISGKVENAISCAIWIVKTFGTEGSRDSIEKLPWFDSSVELTELINSIEIAVTSVEVEDQTVNFRKIPQKDWLDGNLQKALKTEPTSEKFGISNSLKIKDENQRNQIRGFKDNSKEPNAKVSARFGSKFQRVDSSTKRRLFGGVGVGEPRNCRGFL</sequence>
<comment type="function">
    <text evidence="1">Transient component of P-granule which is involved in germline development.</text>
</comment>
<comment type="subunit">
    <text evidence="1">Interacts with pgl-1 and pgl-3; association with either pgl-1 or pgl-3 is not required for P-granule localization.</text>
</comment>
<comment type="subcellular location">
    <subcellularLocation>
        <location evidence="1">Cytoplasmic granule</location>
    </subcellularLocation>
    <text evidence="1">Localizes to P granules only during postembryonic development.</text>
</comment>
<comment type="tissue specificity">
    <text evidence="1">Highly expressed in the germline.</text>
</comment>
<comment type="developmental stage">
    <text evidence="1">Expressed in all embryos during the early cleavage stages until the 100- and 200-cell stage, after which, expression diminishes. During larval development, first expressed in L1 larvae, but it is not highly expressed in the germline. Expression in the germline increases at later larval stages.</text>
</comment>
<comment type="disruption phenotype">
    <text evidence="1">Viable, and not temperature sensitive. Triple knockout with pgl-1 and pgl-3 results in 58% of progeny arresting as late embryos and 5% as larvae at 26 degrees Celsius.</text>
</comment>
<evidence type="ECO:0000269" key="1">
    <source>
    </source>
</evidence>
<evidence type="ECO:0000312" key="2">
    <source>
        <dbReference type="WormBase" id="B0523.3"/>
    </source>
</evidence>
<reference key="1">
    <citation type="journal article" date="2004" name="Genetics">
        <title>The PGL family proteins associate with germ granules and function redundantly in Caenorhabditis elegans germline development.</title>
        <authorList>
            <person name="Kawasaki I."/>
            <person name="Amiri A."/>
            <person name="Fan Y."/>
            <person name="Meyer N."/>
            <person name="Dunkelbarger S."/>
            <person name="Motohashi T."/>
            <person name="Karashima T."/>
            <person name="Bossinger O."/>
            <person name="Strome S."/>
        </authorList>
    </citation>
    <scope>NUCLEOTIDE SEQUENCE [MRNA]</scope>
    <scope>FUNCTION</scope>
    <scope>INTERACTION WITH PGL-1 AND PGL-3</scope>
    <scope>SUBCELLULAR LOCATION</scope>
    <scope>TISSUE SPECIFICITY</scope>
    <scope>DEVELOPMENTAL STAGE</scope>
    <scope>DISRUPTION PHENOTYPE</scope>
</reference>
<reference key="2">
    <citation type="journal article" date="1994" name="Nature">
        <title>2.2 Mb of contiguous nucleotide sequence from chromosome III of C. elegans.</title>
        <authorList>
            <person name="Wilson R."/>
            <person name="Ainscough R."/>
            <person name="Anderson K."/>
            <person name="Baynes C."/>
            <person name="Berks M."/>
            <person name="Bonfield J."/>
            <person name="Burton J."/>
            <person name="Connell M."/>
            <person name="Copsey T."/>
            <person name="Cooper J."/>
            <person name="Coulson A."/>
            <person name="Craxton M."/>
            <person name="Dear S."/>
            <person name="Du Z."/>
            <person name="Durbin R."/>
            <person name="Favello A."/>
            <person name="Fraser A."/>
            <person name="Fulton L."/>
            <person name="Gardner A."/>
            <person name="Green P."/>
            <person name="Hawkins T."/>
            <person name="Hillier L."/>
            <person name="Jier M."/>
            <person name="Johnston L."/>
            <person name="Jones M."/>
            <person name="Kershaw J."/>
            <person name="Kirsten J."/>
            <person name="Laisster N."/>
            <person name="Latreille P."/>
            <person name="Lightning J."/>
            <person name="Lloyd C."/>
            <person name="Mortimore B."/>
            <person name="O'Callaghan M."/>
            <person name="Parsons J."/>
            <person name="Percy C."/>
            <person name="Rifken L."/>
            <person name="Roopra A."/>
            <person name="Saunders D."/>
            <person name="Shownkeen R."/>
            <person name="Sims M."/>
            <person name="Smaldon N."/>
            <person name="Smith A."/>
            <person name="Smith M."/>
            <person name="Sonnhammer E."/>
            <person name="Staden R."/>
            <person name="Sulston J."/>
            <person name="Thierry-Mieg J."/>
            <person name="Thomas K."/>
            <person name="Vaudin M."/>
            <person name="Vaughan K."/>
            <person name="Waterston R."/>
            <person name="Watson A."/>
            <person name="Weinstock L."/>
            <person name="Wilkinson-Sproat J."/>
            <person name="Wohldman P."/>
        </authorList>
    </citation>
    <scope>NUCLEOTIDE SEQUENCE [LARGE SCALE GENOMIC DNA]</scope>
    <source>
        <strain>Bristol N2</strain>
    </source>
</reference>
<reference key="3">
    <citation type="journal article" date="1998" name="Science">
        <title>Genome sequence of the nematode C. elegans: a platform for investigating biology.</title>
        <authorList>
            <consortium name="The C. elegans sequencing consortium"/>
        </authorList>
    </citation>
    <scope>NUCLEOTIDE SEQUENCE [LARGE SCALE GENOMIC DNA]</scope>
    <source>
        <strain>Bristol N2</strain>
    </source>
</reference>
<feature type="chain" id="PRO_0000058358" description="P granule abnormality protein 2">
    <location>
        <begin position="1"/>
        <end position="532"/>
    </location>
</feature>
<organism>
    <name type="scientific">Caenorhabditis elegans</name>
    <dbReference type="NCBI Taxonomy" id="6239"/>
    <lineage>
        <taxon>Eukaryota</taxon>
        <taxon>Metazoa</taxon>
        <taxon>Ecdysozoa</taxon>
        <taxon>Nematoda</taxon>
        <taxon>Chromadorea</taxon>
        <taxon>Rhabditida</taxon>
        <taxon>Rhabditina</taxon>
        <taxon>Rhabditomorpha</taxon>
        <taxon>Rhabditoidea</taxon>
        <taxon>Rhabditidae</taxon>
        <taxon>Peloderinae</taxon>
        <taxon>Caenorhabditis</taxon>
    </lineage>
</organism>
<dbReference type="EMBL" id="AB120730">
    <property type="protein sequence ID" value="BAC87887.1"/>
    <property type="molecule type" value="mRNA"/>
</dbReference>
<dbReference type="EMBL" id="FO080165">
    <property type="protein sequence ID" value="CCD61729.1"/>
    <property type="molecule type" value="Genomic_DNA"/>
</dbReference>
<dbReference type="PIR" id="F88535">
    <property type="entry name" value="F88535"/>
</dbReference>
<dbReference type="RefSeq" id="NP_001370322.1">
    <property type="nucleotide sequence ID" value="NM_001382943.1"/>
</dbReference>
<dbReference type="RefSeq" id="NP_498911.1">
    <property type="nucleotide sequence ID" value="NM_066510.3"/>
</dbReference>
<dbReference type="SMR" id="P34266"/>
<dbReference type="BioGRID" id="46885">
    <property type="interactions" value="2"/>
</dbReference>
<dbReference type="FunCoup" id="P34266">
    <property type="interactions" value="257"/>
</dbReference>
<dbReference type="IntAct" id="P34266">
    <property type="interactions" value="1"/>
</dbReference>
<dbReference type="STRING" id="6239.B0523.3.1"/>
<dbReference type="PaxDb" id="6239-B0523.3"/>
<dbReference type="PeptideAtlas" id="P34266"/>
<dbReference type="EnsemblMetazoa" id="B0523.3.1">
    <property type="protein sequence ID" value="B0523.3.1"/>
    <property type="gene ID" value="WBGene00003993"/>
</dbReference>
<dbReference type="EnsemblMetazoa" id="B0523.3.2">
    <property type="protein sequence ID" value="B0523.3.2"/>
    <property type="gene ID" value="WBGene00003993"/>
</dbReference>
<dbReference type="GeneID" id="182022"/>
<dbReference type="UCSC" id="B0523.3">
    <property type="organism name" value="c. elegans"/>
</dbReference>
<dbReference type="AGR" id="WB:WBGene00003993"/>
<dbReference type="WormBase" id="B0523.3">
    <property type="protein sequence ID" value="CE20462"/>
    <property type="gene ID" value="WBGene00003993"/>
    <property type="gene designation" value="pgl-2"/>
</dbReference>
<dbReference type="eggNOG" id="ENOG502QVYU">
    <property type="taxonomic scope" value="Eukaryota"/>
</dbReference>
<dbReference type="GeneTree" id="ENSGT00970000196090"/>
<dbReference type="HOGENOM" id="CLU_512137_0_0_1"/>
<dbReference type="InParanoid" id="P34266"/>
<dbReference type="OMA" id="FMEICEL"/>
<dbReference type="OrthoDB" id="5875530at2759"/>
<dbReference type="PhylomeDB" id="P34266"/>
<dbReference type="PRO" id="PR:P34266"/>
<dbReference type="Proteomes" id="UP000001940">
    <property type="component" value="Chromosome III"/>
</dbReference>
<dbReference type="Bgee" id="WBGene00003993">
    <property type="expression patterns" value="Expressed in germ line (C elegans) and 4 other cell types or tissues"/>
</dbReference>
<dbReference type="GO" id="GO:0043186">
    <property type="term" value="C:P granule"/>
    <property type="evidence" value="ECO:0000314"/>
    <property type="project" value="WormBase"/>
</dbReference>
<dbReference type="GO" id="GO:0048477">
    <property type="term" value="P:oogenesis"/>
    <property type="evidence" value="ECO:0007669"/>
    <property type="project" value="UniProtKB-KW"/>
</dbReference>
<protein>
    <recommendedName>
        <fullName>P granule abnormality protein 2</fullName>
    </recommendedName>
</protein>
<accession>P34266</accession>
<accession>P34267</accession>
<accession>P90737</accession>